<comment type="function">
    <text evidence="1">Major role in the synthesis of nucleoside triphosphates other than ATP. The ATP gamma phosphate is transferred to the NDP beta phosphate via a ping-pong mechanism, using a phosphorylated active-site intermediate.</text>
</comment>
<comment type="catalytic activity">
    <reaction evidence="1">
        <text>a 2'-deoxyribonucleoside 5'-diphosphate + ATP = a 2'-deoxyribonucleoside 5'-triphosphate + ADP</text>
        <dbReference type="Rhea" id="RHEA:44640"/>
        <dbReference type="ChEBI" id="CHEBI:30616"/>
        <dbReference type="ChEBI" id="CHEBI:61560"/>
        <dbReference type="ChEBI" id="CHEBI:73316"/>
        <dbReference type="ChEBI" id="CHEBI:456216"/>
        <dbReference type="EC" id="2.7.4.6"/>
    </reaction>
</comment>
<comment type="catalytic activity">
    <reaction evidence="1">
        <text>a ribonucleoside 5'-diphosphate + ATP = a ribonucleoside 5'-triphosphate + ADP</text>
        <dbReference type="Rhea" id="RHEA:18113"/>
        <dbReference type="ChEBI" id="CHEBI:30616"/>
        <dbReference type="ChEBI" id="CHEBI:57930"/>
        <dbReference type="ChEBI" id="CHEBI:61557"/>
        <dbReference type="ChEBI" id="CHEBI:456216"/>
        <dbReference type="EC" id="2.7.4.6"/>
    </reaction>
</comment>
<comment type="cofactor">
    <cofactor evidence="1">
        <name>Mg(2+)</name>
        <dbReference type="ChEBI" id="CHEBI:18420"/>
    </cofactor>
</comment>
<comment type="subunit">
    <text evidence="1">Homotetramer.</text>
</comment>
<comment type="subcellular location">
    <subcellularLocation>
        <location evidence="1">Cytoplasm</location>
    </subcellularLocation>
</comment>
<comment type="similarity">
    <text evidence="1">Belongs to the NDK family.</text>
</comment>
<name>NDK_PARP8</name>
<dbReference type="EC" id="2.7.4.6" evidence="1"/>
<dbReference type="EMBL" id="CP001043">
    <property type="protein sequence ID" value="ACC70605.1"/>
    <property type="molecule type" value="Genomic_DNA"/>
</dbReference>
<dbReference type="RefSeq" id="WP_012400818.1">
    <property type="nucleotide sequence ID" value="NC_010622.1"/>
</dbReference>
<dbReference type="SMR" id="B2JIV4"/>
<dbReference type="STRING" id="391038.Bphy_1423"/>
<dbReference type="KEGG" id="bph:Bphy_1423"/>
<dbReference type="eggNOG" id="COG0105">
    <property type="taxonomic scope" value="Bacteria"/>
</dbReference>
<dbReference type="HOGENOM" id="CLU_060216_8_1_4"/>
<dbReference type="OrthoDB" id="9801161at2"/>
<dbReference type="Proteomes" id="UP000001192">
    <property type="component" value="Chromosome 1"/>
</dbReference>
<dbReference type="GO" id="GO:0005737">
    <property type="term" value="C:cytoplasm"/>
    <property type="evidence" value="ECO:0007669"/>
    <property type="project" value="UniProtKB-SubCell"/>
</dbReference>
<dbReference type="GO" id="GO:0005524">
    <property type="term" value="F:ATP binding"/>
    <property type="evidence" value="ECO:0007669"/>
    <property type="project" value="UniProtKB-UniRule"/>
</dbReference>
<dbReference type="GO" id="GO:0046872">
    <property type="term" value="F:metal ion binding"/>
    <property type="evidence" value="ECO:0007669"/>
    <property type="project" value="UniProtKB-KW"/>
</dbReference>
<dbReference type="GO" id="GO:0004550">
    <property type="term" value="F:nucleoside diphosphate kinase activity"/>
    <property type="evidence" value="ECO:0007669"/>
    <property type="project" value="UniProtKB-UniRule"/>
</dbReference>
<dbReference type="GO" id="GO:0006241">
    <property type="term" value="P:CTP biosynthetic process"/>
    <property type="evidence" value="ECO:0007669"/>
    <property type="project" value="UniProtKB-UniRule"/>
</dbReference>
<dbReference type="GO" id="GO:0006183">
    <property type="term" value="P:GTP biosynthetic process"/>
    <property type="evidence" value="ECO:0007669"/>
    <property type="project" value="UniProtKB-UniRule"/>
</dbReference>
<dbReference type="GO" id="GO:0006228">
    <property type="term" value="P:UTP biosynthetic process"/>
    <property type="evidence" value="ECO:0007669"/>
    <property type="project" value="UniProtKB-UniRule"/>
</dbReference>
<dbReference type="CDD" id="cd04413">
    <property type="entry name" value="NDPk_I"/>
    <property type="match status" value="1"/>
</dbReference>
<dbReference type="FunFam" id="3.30.70.141:FF:000001">
    <property type="entry name" value="Nucleoside diphosphate kinase"/>
    <property type="match status" value="1"/>
</dbReference>
<dbReference type="Gene3D" id="3.30.70.141">
    <property type="entry name" value="Nucleoside diphosphate kinase-like domain"/>
    <property type="match status" value="1"/>
</dbReference>
<dbReference type="HAMAP" id="MF_00451">
    <property type="entry name" value="NDP_kinase"/>
    <property type="match status" value="1"/>
</dbReference>
<dbReference type="InterPro" id="IPR034907">
    <property type="entry name" value="NDK-like_dom"/>
</dbReference>
<dbReference type="InterPro" id="IPR036850">
    <property type="entry name" value="NDK-like_dom_sf"/>
</dbReference>
<dbReference type="InterPro" id="IPR001564">
    <property type="entry name" value="Nucleoside_diP_kinase"/>
</dbReference>
<dbReference type="InterPro" id="IPR023005">
    <property type="entry name" value="Nucleoside_diP_kinase_AS"/>
</dbReference>
<dbReference type="NCBIfam" id="NF001908">
    <property type="entry name" value="PRK00668.1"/>
    <property type="match status" value="1"/>
</dbReference>
<dbReference type="PANTHER" id="PTHR46161">
    <property type="entry name" value="NUCLEOSIDE DIPHOSPHATE KINASE"/>
    <property type="match status" value="1"/>
</dbReference>
<dbReference type="PANTHER" id="PTHR46161:SF3">
    <property type="entry name" value="NUCLEOSIDE DIPHOSPHATE KINASE DDB_G0292928-RELATED"/>
    <property type="match status" value="1"/>
</dbReference>
<dbReference type="Pfam" id="PF00334">
    <property type="entry name" value="NDK"/>
    <property type="match status" value="1"/>
</dbReference>
<dbReference type="PRINTS" id="PR01243">
    <property type="entry name" value="NUCDPKINASE"/>
</dbReference>
<dbReference type="SMART" id="SM00562">
    <property type="entry name" value="NDK"/>
    <property type="match status" value="1"/>
</dbReference>
<dbReference type="SUPFAM" id="SSF54919">
    <property type="entry name" value="Nucleoside diphosphate kinase, NDK"/>
    <property type="match status" value="1"/>
</dbReference>
<dbReference type="PROSITE" id="PS00469">
    <property type="entry name" value="NDPK"/>
    <property type="match status" value="1"/>
</dbReference>
<dbReference type="PROSITE" id="PS51374">
    <property type="entry name" value="NDPK_LIKE"/>
    <property type="match status" value="1"/>
</dbReference>
<sequence length="141" mass="15398">MAIERTLSIIKPDAVAKNVIGQIYSRFENAGLKIVASRMVHLSRADAEKFYAVHAARPFFKDLVEFMISGPVQVQVLEGEGAILKNRDLMGATDPKKAEKGTIRADFADSIDANAVHGSDAPETAAVEVAFFFPEVNVYSR</sequence>
<reference key="1">
    <citation type="journal article" date="2014" name="Stand. Genomic Sci.">
        <title>Complete genome sequence of Burkholderia phymatum STM815(T), a broad host range and efficient nitrogen-fixing symbiont of Mimosa species.</title>
        <authorList>
            <person name="Moulin L."/>
            <person name="Klonowska A."/>
            <person name="Caroline B."/>
            <person name="Booth K."/>
            <person name="Vriezen J.A."/>
            <person name="Melkonian R."/>
            <person name="James E.K."/>
            <person name="Young J.P."/>
            <person name="Bena G."/>
            <person name="Hauser L."/>
            <person name="Land M."/>
            <person name="Kyrpides N."/>
            <person name="Bruce D."/>
            <person name="Chain P."/>
            <person name="Copeland A."/>
            <person name="Pitluck S."/>
            <person name="Woyke T."/>
            <person name="Lizotte-Waniewski M."/>
            <person name="Bristow J."/>
            <person name="Riley M."/>
        </authorList>
    </citation>
    <scope>NUCLEOTIDE SEQUENCE [LARGE SCALE GENOMIC DNA]</scope>
    <source>
        <strain>DSM 17167 / CIP 108236 / LMG 21445 / STM815</strain>
    </source>
</reference>
<accession>B2JIV4</accession>
<gene>
    <name evidence="1" type="primary">ndk</name>
    <name type="ordered locus">Bphy_1423</name>
</gene>
<evidence type="ECO:0000255" key="1">
    <source>
        <dbReference type="HAMAP-Rule" id="MF_00451"/>
    </source>
</evidence>
<proteinExistence type="inferred from homology"/>
<keyword id="KW-0067">ATP-binding</keyword>
<keyword id="KW-0963">Cytoplasm</keyword>
<keyword id="KW-0418">Kinase</keyword>
<keyword id="KW-0460">Magnesium</keyword>
<keyword id="KW-0479">Metal-binding</keyword>
<keyword id="KW-0546">Nucleotide metabolism</keyword>
<keyword id="KW-0547">Nucleotide-binding</keyword>
<keyword id="KW-0597">Phosphoprotein</keyword>
<keyword id="KW-1185">Reference proteome</keyword>
<keyword id="KW-0808">Transferase</keyword>
<protein>
    <recommendedName>
        <fullName evidence="1">Nucleoside diphosphate kinase</fullName>
        <shortName evidence="1">NDK</shortName>
        <shortName evidence="1">NDP kinase</shortName>
        <ecNumber evidence="1">2.7.4.6</ecNumber>
    </recommendedName>
    <alternativeName>
        <fullName evidence="1">Nucleoside-2-P kinase</fullName>
    </alternativeName>
</protein>
<feature type="chain" id="PRO_1000124940" description="Nucleoside diphosphate kinase">
    <location>
        <begin position="1"/>
        <end position="141"/>
    </location>
</feature>
<feature type="active site" description="Pros-phosphohistidine intermediate" evidence="1">
    <location>
        <position position="117"/>
    </location>
</feature>
<feature type="binding site" evidence="1">
    <location>
        <position position="11"/>
    </location>
    <ligand>
        <name>ATP</name>
        <dbReference type="ChEBI" id="CHEBI:30616"/>
    </ligand>
</feature>
<feature type="binding site" evidence="1">
    <location>
        <position position="59"/>
    </location>
    <ligand>
        <name>ATP</name>
        <dbReference type="ChEBI" id="CHEBI:30616"/>
    </ligand>
</feature>
<feature type="binding site" evidence="1">
    <location>
        <position position="87"/>
    </location>
    <ligand>
        <name>ATP</name>
        <dbReference type="ChEBI" id="CHEBI:30616"/>
    </ligand>
</feature>
<feature type="binding site" evidence="1">
    <location>
        <position position="93"/>
    </location>
    <ligand>
        <name>ATP</name>
        <dbReference type="ChEBI" id="CHEBI:30616"/>
    </ligand>
</feature>
<feature type="binding site" evidence="1">
    <location>
        <position position="104"/>
    </location>
    <ligand>
        <name>ATP</name>
        <dbReference type="ChEBI" id="CHEBI:30616"/>
    </ligand>
</feature>
<feature type="binding site" evidence="1">
    <location>
        <position position="114"/>
    </location>
    <ligand>
        <name>ATP</name>
        <dbReference type="ChEBI" id="CHEBI:30616"/>
    </ligand>
</feature>
<organism>
    <name type="scientific">Paraburkholderia phymatum (strain DSM 17167 / CIP 108236 / LMG 21445 / STM815)</name>
    <name type="common">Burkholderia phymatum</name>
    <dbReference type="NCBI Taxonomy" id="391038"/>
    <lineage>
        <taxon>Bacteria</taxon>
        <taxon>Pseudomonadati</taxon>
        <taxon>Pseudomonadota</taxon>
        <taxon>Betaproteobacteria</taxon>
        <taxon>Burkholderiales</taxon>
        <taxon>Burkholderiaceae</taxon>
        <taxon>Paraburkholderia</taxon>
    </lineage>
</organism>